<name>EFP_CROS8</name>
<comment type="function">
    <text evidence="1">Involved in peptide bond synthesis. Alleviates ribosome stalling that occurs when 3 or more consecutive Pro residues or the sequence PPG is present in a protein, possibly by augmenting the peptidyl transferase activity of the ribosome. Modification of Lys-34 is required for alleviation.</text>
</comment>
<comment type="pathway">
    <text evidence="1">Protein biosynthesis; polypeptide chain elongation.</text>
</comment>
<comment type="subcellular location">
    <subcellularLocation>
        <location evidence="1">Cytoplasm</location>
    </subcellularLocation>
</comment>
<comment type="PTM">
    <text evidence="1">May be beta-lysylated on the epsilon-amino group of Lys-34 by the combined action of EpmA and EpmB, and then hydroxylated on the C5 position of the same residue by EpmC (if this protein is present). Lysylation is critical for the stimulatory effect of EF-P on peptide-bond formation. The lysylation moiety may extend toward the peptidyltransferase center and stabilize the terminal 3-CCA end of the tRNA. Hydroxylation of the C5 position on Lys-34 may allow additional potential stabilizing hydrogen-bond interactions with the P-tRNA.</text>
</comment>
<comment type="similarity">
    <text evidence="1">Belongs to the elongation factor P family.</text>
</comment>
<reference key="1">
    <citation type="journal article" date="2010" name="PLoS ONE">
        <title>Genome sequence of Cronobacter sakazakii BAA-894 and comparative genomic hybridization analysis with other Cronobacter species.</title>
        <authorList>
            <person name="Kucerova E."/>
            <person name="Clifton S.W."/>
            <person name="Xia X.Q."/>
            <person name="Long F."/>
            <person name="Porwollik S."/>
            <person name="Fulton L."/>
            <person name="Fronick C."/>
            <person name="Minx P."/>
            <person name="Kyung K."/>
            <person name="Warren W."/>
            <person name="Fulton R."/>
            <person name="Feng D."/>
            <person name="Wollam A."/>
            <person name="Shah N."/>
            <person name="Bhonagiri V."/>
            <person name="Nash W.E."/>
            <person name="Hallsworth-Pepin K."/>
            <person name="Wilson R.K."/>
            <person name="McClelland M."/>
            <person name="Forsythe S.J."/>
        </authorList>
    </citation>
    <scope>NUCLEOTIDE SEQUENCE [LARGE SCALE GENOMIC DNA]</scope>
    <source>
        <strain>ATCC BAA-894</strain>
    </source>
</reference>
<evidence type="ECO:0000255" key="1">
    <source>
        <dbReference type="HAMAP-Rule" id="MF_00141"/>
    </source>
</evidence>
<proteinExistence type="inferred from homology"/>
<organism>
    <name type="scientific">Cronobacter sakazakii (strain ATCC BAA-894)</name>
    <name type="common">Enterobacter sakazakii</name>
    <dbReference type="NCBI Taxonomy" id="290339"/>
    <lineage>
        <taxon>Bacteria</taxon>
        <taxon>Pseudomonadati</taxon>
        <taxon>Pseudomonadota</taxon>
        <taxon>Gammaproteobacteria</taxon>
        <taxon>Enterobacterales</taxon>
        <taxon>Enterobacteriaceae</taxon>
        <taxon>Cronobacter</taxon>
    </lineage>
</organism>
<sequence>MATYSSNDFRAGLKIMMDGEPYAVESSEFVKPGKGQAFARVKLRRLLTGSRVEKTFKSTDSAEGADVVDMNLTYLYNDGEFWHFMNNETFEQLAADAKAVGDNAKWLLDQAECIVTLWNGQPISVTPPNFVELEIVDTDPGLKGDTAGTGGKPATLSTGAVVKVPLFVQIGEVIKVDTRSGEYVSRVK</sequence>
<gene>
    <name evidence="1" type="primary">efp</name>
    <name type="ordered locus">ESA_00157</name>
</gene>
<feature type="chain" id="PRO_1000010741" description="Elongation factor P">
    <location>
        <begin position="1"/>
        <end position="188"/>
    </location>
</feature>
<feature type="modified residue" description="N6-(3,6-diaminohexanoyl)-5-hydroxylysine" evidence="1">
    <location>
        <position position="34"/>
    </location>
</feature>
<accession>A7MMC3</accession>
<dbReference type="EMBL" id="CP000783">
    <property type="protein sequence ID" value="ABU75461.1"/>
    <property type="molecule type" value="Genomic_DNA"/>
</dbReference>
<dbReference type="RefSeq" id="WP_004386068.1">
    <property type="nucleotide sequence ID" value="NC_009778.1"/>
</dbReference>
<dbReference type="SMR" id="A7MMC3"/>
<dbReference type="GeneID" id="92804727"/>
<dbReference type="KEGG" id="esa:ESA_00157"/>
<dbReference type="HOGENOM" id="CLU_074944_0_0_6"/>
<dbReference type="UniPathway" id="UPA00345"/>
<dbReference type="Proteomes" id="UP000000260">
    <property type="component" value="Chromosome"/>
</dbReference>
<dbReference type="GO" id="GO:0005829">
    <property type="term" value="C:cytosol"/>
    <property type="evidence" value="ECO:0007669"/>
    <property type="project" value="UniProtKB-ARBA"/>
</dbReference>
<dbReference type="GO" id="GO:0003746">
    <property type="term" value="F:translation elongation factor activity"/>
    <property type="evidence" value="ECO:0007669"/>
    <property type="project" value="UniProtKB-UniRule"/>
</dbReference>
<dbReference type="GO" id="GO:0043043">
    <property type="term" value="P:peptide biosynthetic process"/>
    <property type="evidence" value="ECO:0007669"/>
    <property type="project" value="InterPro"/>
</dbReference>
<dbReference type="CDD" id="cd04470">
    <property type="entry name" value="S1_EF-P_repeat_1"/>
    <property type="match status" value="1"/>
</dbReference>
<dbReference type="CDD" id="cd05794">
    <property type="entry name" value="S1_EF-P_repeat_2"/>
    <property type="match status" value="1"/>
</dbReference>
<dbReference type="FunFam" id="2.30.30.30:FF:000003">
    <property type="entry name" value="Elongation factor P"/>
    <property type="match status" value="1"/>
</dbReference>
<dbReference type="FunFam" id="2.40.50.140:FF:000004">
    <property type="entry name" value="Elongation factor P"/>
    <property type="match status" value="1"/>
</dbReference>
<dbReference type="FunFam" id="2.40.50.140:FF:000009">
    <property type="entry name" value="Elongation factor P"/>
    <property type="match status" value="1"/>
</dbReference>
<dbReference type="Gene3D" id="2.30.30.30">
    <property type="match status" value="1"/>
</dbReference>
<dbReference type="Gene3D" id="2.40.50.140">
    <property type="entry name" value="Nucleic acid-binding proteins"/>
    <property type="match status" value="2"/>
</dbReference>
<dbReference type="HAMAP" id="MF_00141">
    <property type="entry name" value="EF_P"/>
    <property type="match status" value="1"/>
</dbReference>
<dbReference type="InterPro" id="IPR015365">
    <property type="entry name" value="Elong-fact-P_C"/>
</dbReference>
<dbReference type="InterPro" id="IPR012340">
    <property type="entry name" value="NA-bd_OB-fold"/>
</dbReference>
<dbReference type="InterPro" id="IPR014722">
    <property type="entry name" value="Rib_uL2_dom2"/>
</dbReference>
<dbReference type="InterPro" id="IPR020599">
    <property type="entry name" value="Transl_elong_fac_P/YeiP"/>
</dbReference>
<dbReference type="InterPro" id="IPR013185">
    <property type="entry name" value="Transl_elong_KOW-like"/>
</dbReference>
<dbReference type="InterPro" id="IPR001059">
    <property type="entry name" value="Transl_elong_P/YeiP_cen"/>
</dbReference>
<dbReference type="InterPro" id="IPR013852">
    <property type="entry name" value="Transl_elong_P/YeiP_CS"/>
</dbReference>
<dbReference type="InterPro" id="IPR011768">
    <property type="entry name" value="Transl_elongation_fac_P"/>
</dbReference>
<dbReference type="InterPro" id="IPR008991">
    <property type="entry name" value="Translation_prot_SH3-like_sf"/>
</dbReference>
<dbReference type="NCBIfam" id="TIGR00038">
    <property type="entry name" value="efp"/>
    <property type="match status" value="1"/>
</dbReference>
<dbReference type="NCBIfam" id="NF001810">
    <property type="entry name" value="PRK00529.1"/>
    <property type="match status" value="1"/>
</dbReference>
<dbReference type="PANTHER" id="PTHR30053">
    <property type="entry name" value="ELONGATION FACTOR P"/>
    <property type="match status" value="1"/>
</dbReference>
<dbReference type="PANTHER" id="PTHR30053:SF12">
    <property type="entry name" value="ELONGATION FACTOR P (EF-P) FAMILY PROTEIN"/>
    <property type="match status" value="1"/>
</dbReference>
<dbReference type="Pfam" id="PF01132">
    <property type="entry name" value="EFP"/>
    <property type="match status" value="1"/>
</dbReference>
<dbReference type="Pfam" id="PF08207">
    <property type="entry name" value="EFP_N"/>
    <property type="match status" value="1"/>
</dbReference>
<dbReference type="Pfam" id="PF09285">
    <property type="entry name" value="Elong-fact-P_C"/>
    <property type="match status" value="1"/>
</dbReference>
<dbReference type="PIRSF" id="PIRSF005901">
    <property type="entry name" value="EF-P"/>
    <property type="match status" value="1"/>
</dbReference>
<dbReference type="SMART" id="SM01185">
    <property type="entry name" value="EFP"/>
    <property type="match status" value="1"/>
</dbReference>
<dbReference type="SMART" id="SM00841">
    <property type="entry name" value="Elong-fact-P_C"/>
    <property type="match status" value="1"/>
</dbReference>
<dbReference type="SUPFAM" id="SSF50249">
    <property type="entry name" value="Nucleic acid-binding proteins"/>
    <property type="match status" value="2"/>
</dbReference>
<dbReference type="SUPFAM" id="SSF50104">
    <property type="entry name" value="Translation proteins SH3-like domain"/>
    <property type="match status" value="1"/>
</dbReference>
<dbReference type="PROSITE" id="PS01275">
    <property type="entry name" value="EFP"/>
    <property type="match status" value="1"/>
</dbReference>
<keyword id="KW-0963">Cytoplasm</keyword>
<keyword id="KW-0251">Elongation factor</keyword>
<keyword id="KW-0379">Hydroxylation</keyword>
<keyword id="KW-0648">Protein biosynthesis</keyword>
<keyword id="KW-1185">Reference proteome</keyword>
<protein>
    <recommendedName>
        <fullName evidence="1">Elongation factor P</fullName>
        <shortName evidence="1">EF-P</shortName>
    </recommendedName>
</protein>